<organism evidence="8 10">
    <name type="scientific">Aedes aegypti</name>
    <name type="common">Yellowfever mosquito</name>
    <name type="synonym">Culex aegypti</name>
    <dbReference type="NCBI Taxonomy" id="7159"/>
    <lineage>
        <taxon>Eukaryota</taxon>
        <taxon>Metazoa</taxon>
        <taxon>Ecdysozoa</taxon>
        <taxon>Arthropoda</taxon>
        <taxon>Hexapoda</taxon>
        <taxon>Insecta</taxon>
        <taxon>Pterygota</taxon>
        <taxon>Neoptera</taxon>
        <taxon>Endopterygota</taxon>
        <taxon>Diptera</taxon>
        <taxon>Nematocera</taxon>
        <taxon>Culicoidea</taxon>
        <taxon>Culicidae</taxon>
        <taxon>Culicinae</taxon>
        <taxon>Aedini</taxon>
        <taxon>Aedes</taxon>
        <taxon>Stegomyia</taxon>
    </lineage>
</organism>
<keyword id="KW-0325">Glycoprotein</keyword>
<keyword id="KW-1039">Host endosome</keyword>
<keyword id="KW-1045">Host mitochondrion</keyword>
<keyword id="KW-1185">Reference proteome</keyword>
<keyword id="KW-0964">Secreted</keyword>
<keyword id="KW-0732">Signal</keyword>
<comment type="function">
    <text evidence="3 5">Activates autophagy in human monocytic cells, dendritic cells and macrophages (PubMed:31937766). Promotes activation of human CD4(+) T-cells (PubMed:36070318). Does not affect cytokine expression in human monocytic cells (PubMed:31937766).</text>
</comment>
<comment type="function">
    <text evidence="3">(Microbial infection) Promotes dengue virus type 2 replication in human monocytic cells, dendritic cells and macrophages (PubMed:31937766). Pro-viral properties are linked to BECN1-mediated autophagy activation in the host (PubMed:31937766). Does not directly interact with the purified envelope protein of dengue virus type 2 (PubMed:31937766).</text>
</comment>
<comment type="function">
    <text evidence="3 4">(Microbial infection) Promotes Zika virus replication in human monocytic cells, dendritic cells and macrophages (PubMed:31937766). Facilitates Zika virus transmission from infected mosquitoes to the host in mouse model (PubMed:31937766). Pro-viral properties are linked to BECN1-mediated autophagy activation in the host (PubMed:31937766). Does not affect Zika virus replication in human endothelial cells and keratinocytes (PubMed:35215815).</text>
</comment>
<comment type="function">
    <text evidence="3">(Microbial infection) Promotes Semliki Forest virus replication in human monocytic cells.</text>
</comment>
<comment type="function">
    <text evidence="3">(Microbial infection) Does not influence Batai virus replication in human monocytic cells.</text>
</comment>
<comment type="subunit">
    <text evidence="3 5">Interacts with human LRPPRC; the interaction interrupts association between BECN1 and LRPPRC. Interacts with human CD4 (PubMed:36070318).</text>
</comment>
<comment type="subunit">
    <text evidence="4">(Microbial infection) Interacts with Zika virus envelope protein E and Zika virus-like particles; the interaction does not affect Zika virus replication in human endothelial cells and keratinocytes.</text>
</comment>
<comment type="subcellular location">
    <subcellularLocation>
        <location evidence="3">Secreted</location>
    </subcellularLocation>
    <subcellularLocation>
        <location evidence="3">Host endosome</location>
    </subcellularLocation>
    <subcellularLocation>
        <location evidence="3">Host mitochondrion</location>
    </subcellularLocation>
    <text evidence="3">Delivered into the human immune cells by endocytosis in a RhoA-dependent manner; escapes from host endosomes to mitochondria.</text>
</comment>
<comment type="tissue specificity">
    <text evidence="3">Saliva (at protein level) (PubMed:31937766). Female salivary gland (PubMed:31937766). No or low-level expression in female hemolymph, midgut, Malpighian tubule system and ovary (PubMed:31937766). No or low-level expression in male tissues (PubMed:31937766).</text>
</comment>
<comment type="induction">
    <text evidence="3">(Microbial infection) Infection with dengue virus or Zika virus does not affect expression.</text>
</comment>
<comment type="disruption phenotype">
    <text evidence="3">(Microbial infection) RNAi-mediated knockdown results in reduced enhancement of dengue and Zika virus infections in human dendritic cells and macrophages after the treatment with salivary gland extracts (PubMed:31937766). Lower viremia and better survival in mice bitten by mosquitoes transmitting Zika virus (PubMed:31937766). No significant effects on Zika virus load in the mosquito salivary glands (PubMed:31937766).</text>
</comment>
<comment type="miscellaneous">
    <text evidence="4">Patients with dengue virus or Zika virus infections during the acute or early convalescence phase have higher levels of IgG serum antibodies against the protein.</text>
</comment>
<comment type="similarity">
    <text evidence="7">Belongs to the CRISP family.</text>
</comment>
<gene>
    <name evidence="8" type="ORF">AAEL000793</name>
</gene>
<name>VA1_AEDAE</name>
<dbReference type="EMBL" id="CH477201">
    <property type="protein sequence ID" value="EAT48176.1"/>
    <property type="molecule type" value="Genomic_DNA"/>
</dbReference>
<dbReference type="SMR" id="A0A1S4EWW7"/>
<dbReference type="PaxDb" id="7159-AAEL000793-PA"/>
<dbReference type="EnsemblMetazoa" id="AAEL000793-RA">
    <property type="protein sequence ID" value="AAEL000793-PA"/>
    <property type="gene ID" value="AAEL000793"/>
</dbReference>
<dbReference type="GeneID" id="5566624"/>
<dbReference type="KEGG" id="aag:5566624"/>
<dbReference type="VEuPathDB" id="VectorBase:AAEL000793"/>
<dbReference type="eggNOG" id="KOG3017">
    <property type="taxonomic scope" value="Eukaryota"/>
</dbReference>
<dbReference type="HOGENOM" id="CLU_035730_7_0_1"/>
<dbReference type="InParanoid" id="Q17N78"/>
<dbReference type="OMA" id="IWEHGPR"/>
<dbReference type="OrthoDB" id="414826at2759"/>
<dbReference type="Proteomes" id="UP000008820">
    <property type="component" value="Chromosome 3"/>
</dbReference>
<dbReference type="Proteomes" id="UP000682892">
    <property type="component" value="Unassembled WGS sequence"/>
</dbReference>
<dbReference type="GO" id="GO:0005576">
    <property type="term" value="C:extracellular region"/>
    <property type="evidence" value="ECO:0007669"/>
    <property type="project" value="UniProtKB-SubCell"/>
</dbReference>
<dbReference type="GO" id="GO:0044174">
    <property type="term" value="C:host cell endosome"/>
    <property type="evidence" value="ECO:0007669"/>
    <property type="project" value="UniProtKB-SubCell"/>
</dbReference>
<dbReference type="GO" id="GO:0033650">
    <property type="term" value="C:host cell mitochondrion"/>
    <property type="evidence" value="ECO:0007669"/>
    <property type="project" value="UniProtKB-SubCell"/>
</dbReference>
<dbReference type="CDD" id="cd05380">
    <property type="entry name" value="CAP_euk"/>
    <property type="match status" value="1"/>
</dbReference>
<dbReference type="FunFam" id="3.40.33.10:FF:000007">
    <property type="entry name" value="Venom allergen"/>
    <property type="match status" value="1"/>
</dbReference>
<dbReference type="Gene3D" id="3.40.33.10">
    <property type="entry name" value="CAP"/>
    <property type="match status" value="1"/>
</dbReference>
<dbReference type="InterPro" id="IPR014044">
    <property type="entry name" value="CAP_dom"/>
</dbReference>
<dbReference type="InterPro" id="IPR035940">
    <property type="entry name" value="CAP_sf"/>
</dbReference>
<dbReference type="InterPro" id="IPR001283">
    <property type="entry name" value="CRISP-related"/>
</dbReference>
<dbReference type="InterPro" id="IPR034763">
    <property type="entry name" value="P14a_insect"/>
</dbReference>
<dbReference type="InterPro" id="IPR002413">
    <property type="entry name" value="V5_allergen-like"/>
</dbReference>
<dbReference type="PANTHER" id="PTHR10334">
    <property type="entry name" value="CYSTEINE-RICH SECRETORY PROTEIN-RELATED"/>
    <property type="match status" value="1"/>
</dbReference>
<dbReference type="Pfam" id="PF00188">
    <property type="entry name" value="CAP"/>
    <property type="match status" value="1"/>
</dbReference>
<dbReference type="PIRSF" id="PIRSF038921">
    <property type="entry name" value="P14a"/>
    <property type="match status" value="1"/>
</dbReference>
<dbReference type="PRINTS" id="PR00838">
    <property type="entry name" value="V5ALLERGEN"/>
</dbReference>
<dbReference type="PRINTS" id="PR00837">
    <property type="entry name" value="V5TPXLIKE"/>
</dbReference>
<dbReference type="SMART" id="SM00198">
    <property type="entry name" value="SCP"/>
    <property type="match status" value="1"/>
</dbReference>
<dbReference type="SUPFAM" id="SSF55797">
    <property type="entry name" value="PR-1-like"/>
    <property type="match status" value="1"/>
</dbReference>
<accession>A0A1S4EWW7</accession>
<accession>Q17N78</accession>
<feature type="signal peptide" evidence="1">
    <location>
        <begin position="1"/>
        <end position="21"/>
    </location>
</feature>
<feature type="chain" id="PRO_5036482775" description="Venom allergen-1" evidence="1">
    <location>
        <begin position="22"/>
        <end position="255"/>
    </location>
</feature>
<feature type="domain" description="SCP" evidence="1">
    <location>
        <begin position="65"/>
        <end position="210"/>
    </location>
</feature>
<feature type="glycosylation site" description="N-linked (GlcNAc...) asparagine" evidence="2">
    <location>
        <position position="146"/>
    </location>
</feature>
<feature type="glycosylation site" description="N-linked (GlcNAc...) asparagine" evidence="2">
    <location>
        <position position="209"/>
    </location>
</feature>
<protein>
    <recommendedName>
        <fullName evidence="6">Venom allergen-1</fullName>
        <shortName evidence="6">AaVA-1</shortName>
    </recommendedName>
</protein>
<evidence type="ECO:0000255" key="1"/>
<evidence type="ECO:0000255" key="2">
    <source>
        <dbReference type="PROSITE-ProRule" id="PRU00498"/>
    </source>
</evidence>
<evidence type="ECO:0000269" key="3">
    <source>
    </source>
</evidence>
<evidence type="ECO:0000269" key="4">
    <source>
    </source>
</evidence>
<evidence type="ECO:0000269" key="5">
    <source>
    </source>
</evidence>
<evidence type="ECO:0000303" key="6">
    <source>
    </source>
</evidence>
<evidence type="ECO:0000305" key="7"/>
<evidence type="ECO:0000312" key="8">
    <source>
        <dbReference type="EMBL" id="EAT48176.1"/>
    </source>
</evidence>
<evidence type="ECO:0000312" key="9">
    <source>
        <dbReference type="Proteomes" id="UP000008820"/>
    </source>
</evidence>
<evidence type="ECO:0000312" key="10">
    <source>
        <dbReference type="Proteomes" id="UP000682892"/>
    </source>
</evidence>
<reference evidence="8" key="1">
    <citation type="journal article" date="2007" name="Science">
        <title>Genome sequence of Aedes aegypti, a major arbovirus vector.</title>
        <authorList>
            <person name="Nene V."/>
            <person name="Wortman J.R."/>
            <person name="Lawson D."/>
            <person name="Haas B.J."/>
            <person name="Kodira C.D."/>
            <person name="Tu Z.J."/>
            <person name="Loftus B.J."/>
            <person name="Xi Z."/>
            <person name="Megy K."/>
            <person name="Grabherr M."/>
            <person name="Ren Q."/>
            <person name="Zdobnov E.M."/>
            <person name="Lobo N.F."/>
            <person name="Campbell K.S."/>
            <person name="Brown S.E."/>
            <person name="Bonaldo M.F."/>
            <person name="Zhu J."/>
            <person name="Sinkins S.P."/>
            <person name="Hogenkamp D.G."/>
            <person name="Amedeo P."/>
            <person name="Arensburger P."/>
            <person name="Atkinson P.W."/>
            <person name="Bidwell S.L."/>
            <person name="Biedler J."/>
            <person name="Birney E."/>
            <person name="Bruggner R.V."/>
            <person name="Costas J."/>
            <person name="Coy M.R."/>
            <person name="Crabtree J."/>
            <person name="Crawford M."/>
            <person name="DeBruyn B."/>
            <person name="DeCaprio D."/>
            <person name="Eiglmeier K."/>
            <person name="Eisenstadt E."/>
            <person name="El-Dorry H."/>
            <person name="Gelbart W.M."/>
            <person name="Gomes S.L."/>
            <person name="Hammond M."/>
            <person name="Hannick L.I."/>
            <person name="Hogan J.R."/>
            <person name="Holmes M.H."/>
            <person name="Jaffe D."/>
            <person name="Johnston S.J."/>
            <person name="Kennedy R.C."/>
            <person name="Koo H."/>
            <person name="Kravitz S."/>
            <person name="Kriventseva E.V."/>
            <person name="Kulp D."/>
            <person name="Labutti K."/>
            <person name="Lee E."/>
            <person name="Li S."/>
            <person name="Lovin D.D."/>
            <person name="Mao C."/>
            <person name="Mauceli E."/>
            <person name="Menck C.F."/>
            <person name="Miller J.R."/>
            <person name="Montgomery P."/>
            <person name="Mori A."/>
            <person name="Nascimento A.L."/>
            <person name="Naveira H.F."/>
            <person name="Nusbaum C."/>
            <person name="O'Leary S.B."/>
            <person name="Orvis J."/>
            <person name="Pertea M."/>
            <person name="Quesneville H."/>
            <person name="Reidenbach K.R."/>
            <person name="Rogers Y.-H.C."/>
            <person name="Roth C.W."/>
            <person name="Schneider J.R."/>
            <person name="Schatz M."/>
            <person name="Shumway M."/>
            <person name="Stanke M."/>
            <person name="Stinson E.O."/>
            <person name="Tubio J.M.C."/>
            <person name="Vanzee J.P."/>
            <person name="Verjovski-Almeida S."/>
            <person name="Werner D."/>
            <person name="White O.R."/>
            <person name="Wyder S."/>
            <person name="Zeng Q."/>
            <person name="Zhao Q."/>
            <person name="Zhao Y."/>
            <person name="Hill C.A."/>
            <person name="Raikhel A.S."/>
            <person name="Soares M.B."/>
            <person name="Knudson D.L."/>
            <person name="Lee N.H."/>
            <person name="Galagan J."/>
            <person name="Salzberg S.L."/>
            <person name="Paulsen I.T."/>
            <person name="Dimopoulos G."/>
            <person name="Collins F.H."/>
            <person name="Bruce B."/>
            <person name="Fraser-Liggett C.M."/>
            <person name="Severson D.W."/>
        </authorList>
    </citation>
    <scope>NUCLEOTIDE SEQUENCE [LARGE SCALE GENOMIC DNA]</scope>
    <source>
        <strain evidence="8">Liverpool</strain>
    </source>
</reference>
<reference evidence="9" key="2">
    <citation type="submission" date="2017-06" db="EMBL/GenBank/DDBJ databases">
        <title>Aedes aegypti genome working group (AGWG) sequencing and assembly.</title>
        <authorList>
            <consortium name="Aedes aegypti Genome Working Group (AGWG)"/>
            <person name="Matthews B.J."/>
        </authorList>
    </citation>
    <scope>NUCLEOTIDE SEQUENCE [LARGE SCALE GENOMIC DNA]</scope>
    <source>
        <strain evidence="9">LVP_AGWG</strain>
    </source>
</reference>
<reference evidence="7" key="3">
    <citation type="journal article" date="2020" name="Nat. Commun.">
        <title>A mosquito salivary protein promotes flavivirus transmission by activation of autophagy.</title>
        <authorList>
            <person name="Sun P."/>
            <person name="Nie K."/>
            <person name="Zhu Y."/>
            <person name="Liu Y."/>
            <person name="Wu P."/>
            <person name="Liu Z."/>
            <person name="Du S."/>
            <person name="Fan H."/>
            <person name="Chen C.H."/>
            <person name="Zhang R."/>
            <person name="Wang P."/>
            <person name="Cheng G."/>
        </authorList>
    </citation>
    <scope>IDENTIFICATION BY MASS SPECTROMETRY</scope>
    <scope>FUNCTION</scope>
    <scope>FUNCTION (MICROBIAL INFECTION)</scope>
    <scope>INTERACTION WITH HUMAN LRPPRC</scope>
    <scope>SUBCELLULAR LOCATION</scope>
    <scope>TISSUE SPECIFICITY</scope>
    <scope>INDUCTION (MICROBIAL INFECTION)</scope>
    <scope>DISRUPTION PHENOTYPE (MICROBIAL INFECTION)</scope>
    <source>
        <strain evidence="6">Rockefeller</strain>
    </source>
</reference>
<reference key="4">
    <citation type="journal article" date="2022" name="PLoS Negl. Trop. Dis.">
        <title>Identification of Aedes aegypti salivary gland proteins interacting with human immune receptor proteins.</title>
        <authorList>
            <person name="Gavor E."/>
            <person name="Choong Y.K."/>
            <person name="Liu Y."/>
            <person name="Pompon J."/>
            <person name="Ooi E.E."/>
            <person name="Mok Y.K."/>
            <person name="Liu H."/>
            <person name="Kini R.M."/>
            <person name="Sivaraman J."/>
        </authorList>
    </citation>
    <scope>FUNCTION</scope>
    <scope>INTERACTION WITH HUMAN CD4</scope>
</reference>
<reference key="5">
    <citation type="journal article" date="2022" name="Viruses">
        <title>Multiple Salivary Proteins from Aedes aegypti Mosquito Bind to the Zika Virus Envelope Protein.</title>
        <authorList>
            <person name="Valenzuela-Leon P.C."/>
            <person name="Shrivastava G."/>
            <person name="Martin-Martin I."/>
            <person name="Cardenas J.C."/>
            <person name="Londono-Renteria B."/>
            <person name="Calvo E."/>
        </authorList>
    </citation>
    <scope>FUNCTION (MICROBIAL INFECTION)</scope>
    <scope>INTERACTION WITH ZIKA VIRUS ENVELOPE PROTEIN E</scope>
</reference>
<sequence>MASHVIVKFITAAILIGSCYANYCDQSLCRRGPHVACNAPTQFGSACGQEPKFVKMDARMKNLLLKKHNELRAEIACGKHGFPQAARMPTLVWDDELAHIASFNARKCIFAHDKCRNTREFKFAGQNLAITAFAGYNFQAADRAENFTQEWFNEHKDCPKSYVDSYPMSHSGPQIGHFTQMVNDRAWKMGCSMVHYKNGRVIKYYLVCNYSMTNMIEEPIYTRGSAGSKCQTGQNPQYRGLCSPREKVRSESYRG</sequence>
<proteinExistence type="evidence at protein level"/>